<protein>
    <recommendedName>
        <fullName>Chorion-specific transcription factor GCMb</fullName>
        <shortName evidence="4">mGCMb</shortName>
    </recommendedName>
    <alternativeName>
        <fullName>GCM motif protein 2</fullName>
    </alternativeName>
    <alternativeName>
        <fullName>Glial cells missing homolog 2</fullName>
    </alternativeName>
</protein>
<keyword id="KW-0217">Developmental protein</keyword>
<keyword id="KW-0238">DNA-binding</keyword>
<keyword id="KW-0479">Metal-binding</keyword>
<keyword id="KW-0539">Nucleus</keyword>
<keyword id="KW-1185">Reference proteome</keyword>
<keyword id="KW-0804">Transcription</keyword>
<keyword id="KW-0805">Transcription regulation</keyword>
<keyword id="KW-0862">Zinc</keyword>
<reference key="1">
    <citation type="journal article" date="1996" name="Proc. Natl. Acad. Sci. U.S.A.">
        <title>The gcm-motif: a novel DNA binding motif conserved in Drosophila and mammals.</title>
        <authorList>
            <person name="Akiyama Y."/>
            <person name="Hosoya T."/>
            <person name="Poole A.M."/>
            <person name="Hotta Y."/>
        </authorList>
    </citation>
    <scope>NUCLEOTIDE SEQUENCE [MRNA]</scope>
    <source>
        <tissue>Brain</tissue>
    </source>
</reference>
<reference key="2">
    <citation type="journal article" date="1998" name="Proc. Natl. Acad. Sci. U.S.A.">
        <title>Isolation and characterization of mammalian homologs of the Drosophila gene glial cells missing.</title>
        <authorList>
            <person name="Kim J."/>
            <person name="Jones B.W."/>
            <person name="Zock C."/>
            <person name="Chen Z."/>
            <person name="Wang H."/>
            <person name="Goodman C.S."/>
            <person name="Anderson D.J."/>
        </authorList>
    </citation>
    <scope>NUCLEOTIDE SEQUENCE [GENOMIC DNA / MRNA]</scope>
    <source>
        <strain>129/SvEv</strain>
        <strain>C57BL/6J</strain>
    </source>
</reference>
<reference key="3">
    <citation type="journal article" date="2004" name="Genome Res.">
        <title>The status, quality, and expansion of the NIH full-length cDNA project: the Mammalian Gene Collection (MGC).</title>
        <authorList>
            <consortium name="The MGC Project Team"/>
        </authorList>
    </citation>
    <scope>NUCLEOTIDE SEQUENCE [LARGE SCALE MRNA]</scope>
</reference>
<comment type="function">
    <text evidence="1">Transcription factor that binds specific sequences on gene promoters and activate their transcription. Through the regulation of gene transcription, may play a role in parathyroid gland development.</text>
</comment>
<comment type="subcellular location">
    <subcellularLocation>
        <location evidence="1">Nucleus</location>
    </subcellularLocation>
</comment>
<comment type="domain">
    <text evidence="1">The C-terminal conserved inhibitory domain (CCID) negatively regulates the transcriptional activity of the protein.</text>
</comment>
<dbReference type="EMBL" id="D88611">
    <property type="protein sequence ID" value="BAA13649.1"/>
    <property type="molecule type" value="mRNA"/>
</dbReference>
<dbReference type="EMBL" id="AF081556">
    <property type="protein sequence ID" value="AAC64782.1"/>
    <property type="molecule type" value="mRNA"/>
</dbReference>
<dbReference type="EMBL" id="AF081558">
    <property type="protein sequence ID" value="AAC64784.1"/>
    <property type="molecule type" value="Genomic_DNA"/>
</dbReference>
<dbReference type="EMBL" id="BC110631">
    <property type="protein sequence ID" value="AAI10632.1"/>
    <property type="molecule type" value="mRNA"/>
</dbReference>
<dbReference type="EMBL" id="BC110632">
    <property type="protein sequence ID" value="AAI10633.1"/>
    <property type="molecule type" value="mRNA"/>
</dbReference>
<dbReference type="CCDS" id="CCDS26472.1"/>
<dbReference type="RefSeq" id="NP_032130.2">
    <property type="nucleotide sequence ID" value="NM_008104.2"/>
</dbReference>
<dbReference type="SMR" id="O09102"/>
<dbReference type="FunCoup" id="O09102">
    <property type="interactions" value="1128"/>
</dbReference>
<dbReference type="STRING" id="10090.ENSMUSP00000021791"/>
<dbReference type="PhosphoSitePlus" id="O09102"/>
<dbReference type="PaxDb" id="10090-ENSMUSP00000021791"/>
<dbReference type="DNASU" id="107889"/>
<dbReference type="GeneID" id="107889"/>
<dbReference type="KEGG" id="mmu:107889"/>
<dbReference type="UCSC" id="uc007qey.1">
    <property type="organism name" value="mouse"/>
</dbReference>
<dbReference type="AGR" id="MGI:1861438"/>
<dbReference type="CTD" id="9247"/>
<dbReference type="MGI" id="MGI:1861438">
    <property type="gene designation" value="Gcm2"/>
</dbReference>
<dbReference type="eggNOG" id="ENOG502QU2X">
    <property type="taxonomic scope" value="Eukaryota"/>
</dbReference>
<dbReference type="InParanoid" id="O09102"/>
<dbReference type="OrthoDB" id="6241117at2759"/>
<dbReference type="PhylomeDB" id="O09102"/>
<dbReference type="TreeFam" id="TF324146"/>
<dbReference type="BioGRID-ORCS" id="107889">
    <property type="hits" value="4 hits in 77 CRISPR screens"/>
</dbReference>
<dbReference type="PRO" id="PR:O09102"/>
<dbReference type="Proteomes" id="UP000000589">
    <property type="component" value="Unplaced"/>
</dbReference>
<dbReference type="RNAct" id="O09102">
    <property type="molecule type" value="protein"/>
</dbReference>
<dbReference type="GO" id="GO:0005634">
    <property type="term" value="C:nucleus"/>
    <property type="evidence" value="ECO:0000314"/>
    <property type="project" value="MGI"/>
</dbReference>
<dbReference type="GO" id="GO:0003677">
    <property type="term" value="F:DNA binding"/>
    <property type="evidence" value="ECO:0000247"/>
    <property type="project" value="MGI"/>
</dbReference>
<dbReference type="GO" id="GO:0001228">
    <property type="term" value="F:DNA-binding transcription activator activity, RNA polymerase II-specific"/>
    <property type="evidence" value="ECO:0007669"/>
    <property type="project" value="InterPro"/>
</dbReference>
<dbReference type="GO" id="GO:0003700">
    <property type="term" value="F:DNA-binding transcription factor activity"/>
    <property type="evidence" value="ECO:0000304"/>
    <property type="project" value="MGI"/>
</dbReference>
<dbReference type="GO" id="GO:0000981">
    <property type="term" value="F:DNA-binding transcription factor activity, RNA polymerase II-specific"/>
    <property type="evidence" value="ECO:0000250"/>
    <property type="project" value="UniProtKB"/>
</dbReference>
<dbReference type="GO" id="GO:0046872">
    <property type="term" value="F:metal ion binding"/>
    <property type="evidence" value="ECO:0007669"/>
    <property type="project" value="UniProtKB-KW"/>
</dbReference>
<dbReference type="GO" id="GO:0043565">
    <property type="term" value="F:sequence-specific DNA binding"/>
    <property type="evidence" value="ECO:0000250"/>
    <property type="project" value="UniProtKB"/>
</dbReference>
<dbReference type="GO" id="GO:0006915">
    <property type="term" value="P:apoptotic process"/>
    <property type="evidence" value="ECO:0000315"/>
    <property type="project" value="MGI"/>
</dbReference>
<dbReference type="GO" id="GO:1904019">
    <property type="term" value="P:epithelial cell apoptotic process"/>
    <property type="evidence" value="ECO:0000315"/>
    <property type="project" value="MGI"/>
</dbReference>
<dbReference type="GO" id="GO:0010467">
    <property type="term" value="P:gene expression"/>
    <property type="evidence" value="ECO:0000315"/>
    <property type="project" value="MGI"/>
</dbReference>
<dbReference type="GO" id="GO:0002067">
    <property type="term" value="P:glandular epithelial cell differentiation"/>
    <property type="evidence" value="ECO:0000315"/>
    <property type="project" value="MGI"/>
</dbReference>
<dbReference type="GO" id="GO:0006874">
    <property type="term" value="P:intracellular calcium ion homeostasis"/>
    <property type="evidence" value="ECO:0000250"/>
    <property type="project" value="UniProtKB"/>
</dbReference>
<dbReference type="GO" id="GO:0030643">
    <property type="term" value="P:intracellular phosphate ion homeostasis"/>
    <property type="evidence" value="ECO:0000250"/>
    <property type="project" value="UniProtKB"/>
</dbReference>
<dbReference type="GO" id="GO:1904036">
    <property type="term" value="P:negative regulation of epithelial cell apoptotic process"/>
    <property type="evidence" value="ECO:0000315"/>
    <property type="project" value="MGI"/>
</dbReference>
<dbReference type="GO" id="GO:0060017">
    <property type="term" value="P:parathyroid gland development"/>
    <property type="evidence" value="ECO:0000315"/>
    <property type="project" value="MGI"/>
</dbReference>
<dbReference type="GO" id="GO:0006366">
    <property type="term" value="P:transcription by RNA polymerase II"/>
    <property type="evidence" value="ECO:0000250"/>
    <property type="project" value="UniProtKB"/>
</dbReference>
<dbReference type="FunFam" id="3.30.70.3530:FF:000001">
    <property type="entry name" value="Chorion-specific transcription factor GCMb"/>
    <property type="match status" value="1"/>
</dbReference>
<dbReference type="Gene3D" id="2.20.25.670">
    <property type="entry name" value="GCM domain, large subdomain"/>
    <property type="match status" value="1"/>
</dbReference>
<dbReference type="Gene3D" id="3.30.70.3530">
    <property type="entry name" value="GCM motif"/>
    <property type="match status" value="1"/>
</dbReference>
<dbReference type="InterPro" id="IPR039791">
    <property type="entry name" value="GCM"/>
</dbReference>
<dbReference type="InterPro" id="IPR036115">
    <property type="entry name" value="GCM_dom_sf"/>
</dbReference>
<dbReference type="InterPro" id="IPR043020">
    <property type="entry name" value="GCM_large"/>
</dbReference>
<dbReference type="InterPro" id="IPR043021">
    <property type="entry name" value="GCM_small"/>
</dbReference>
<dbReference type="InterPro" id="IPR003902">
    <property type="entry name" value="Tscrpt_reg_GCM"/>
</dbReference>
<dbReference type="PANTHER" id="PTHR12414:SF7">
    <property type="entry name" value="CHORION-SPECIFIC TRANSCRIPTION FACTOR GCMB"/>
    <property type="match status" value="1"/>
</dbReference>
<dbReference type="PANTHER" id="PTHR12414">
    <property type="entry name" value="GLIAL CELLS MISSING RELATED/GLIDE"/>
    <property type="match status" value="1"/>
</dbReference>
<dbReference type="Pfam" id="PF03615">
    <property type="entry name" value="GCM"/>
    <property type="match status" value="1"/>
</dbReference>
<dbReference type="SUPFAM" id="SSF90073">
    <property type="entry name" value="GCM domain"/>
    <property type="match status" value="1"/>
</dbReference>
<dbReference type="PROSITE" id="PS50807">
    <property type="entry name" value="GCM"/>
    <property type="match status" value="1"/>
</dbReference>
<evidence type="ECO:0000250" key="1">
    <source>
        <dbReference type="UniProtKB" id="O75603"/>
    </source>
</evidence>
<evidence type="ECO:0000255" key="2">
    <source>
        <dbReference type="PROSITE-ProRule" id="PRU00245"/>
    </source>
</evidence>
<evidence type="ECO:0000256" key="3">
    <source>
        <dbReference type="SAM" id="MobiDB-lite"/>
    </source>
</evidence>
<evidence type="ECO:0000303" key="4">
    <source>
    </source>
</evidence>
<evidence type="ECO:0000305" key="5"/>
<evidence type="ECO:0000312" key="6">
    <source>
        <dbReference type="MGI" id="MGI:1861438"/>
    </source>
</evidence>
<sequence length="504" mass="56039">MPADSTQDEDAVLSYGMKLTWDINDPQMPQEPTHFDHFREWPDGYVRFIYSSQEKKAQRHLSGWAMRNTNNHNGHILKKSCLGVVVCARACALKDGSHLQLRPAICDKARLKQQKKACPNCHSPLELVPCRGHSGYPVTNFWRLDGNAIFFQAKGVHDHPRPESKSETEGRRSALKRQMASFYQPQKRRSEEPEARSTQDIRGHLNSTAALEPTELFDMTADTSFPIPGQPSPSFPNSDVHRVTCDLPTFQGDIILPFQKYPNPSIYFPGPPWGYELASSGVTGSSPYSTLYKDSSVVPDDPDWIPLNSLQYNVSSYGSYERTLDFTARYHSWKPTHGKPSLEEKVDCEQCQAVPTSPYYNLELPCRYLPVPAAGTQALQTVITTTVAYQAYQHPALKHSDSMQEVSSLASCTYASENLPMPIYPPALDPQEGVIQAASPSGRAPLKVPGDCQAPRPTLDFPQEADPSGTDGADVWDVCLSGVGSVMGYLDRTGQPFSFDNEDF</sequence>
<name>GCM2_MOUSE</name>
<feature type="chain" id="PRO_0000126651" description="Chorion-specific transcription factor GCMb">
    <location>
        <begin position="1"/>
        <end position="504"/>
    </location>
</feature>
<feature type="DNA-binding region" description="GCM" evidence="2">
    <location>
        <begin position="19"/>
        <end position="174"/>
    </location>
</feature>
<feature type="region of interest" description="Disordered" evidence="3">
    <location>
        <begin position="155"/>
        <end position="203"/>
    </location>
</feature>
<feature type="region of interest" description="C-terminal conserved inhibitory domain (CCID)" evidence="1">
    <location>
        <begin position="379"/>
        <end position="393"/>
    </location>
</feature>
<feature type="region of interest" description="Disordered" evidence="3">
    <location>
        <begin position="438"/>
        <end position="472"/>
    </location>
</feature>
<feature type="compositionally biased region" description="Basic and acidic residues" evidence="3">
    <location>
        <begin position="155"/>
        <end position="172"/>
    </location>
</feature>
<feature type="compositionally biased region" description="Basic and acidic residues" evidence="3">
    <location>
        <begin position="188"/>
        <end position="203"/>
    </location>
</feature>
<feature type="binding site" evidence="2">
    <location>
        <position position="81"/>
    </location>
    <ligand>
        <name>Zn(2+)</name>
        <dbReference type="ChEBI" id="CHEBI:29105"/>
        <label>1</label>
    </ligand>
</feature>
<feature type="binding site" evidence="2">
    <location>
        <position position="87"/>
    </location>
    <ligand>
        <name>Zn(2+)</name>
        <dbReference type="ChEBI" id="CHEBI:29105"/>
        <label>2</label>
    </ligand>
</feature>
<feature type="binding site" evidence="2">
    <location>
        <position position="91"/>
    </location>
    <ligand>
        <name>Zn(2+)</name>
        <dbReference type="ChEBI" id="CHEBI:29105"/>
        <label>2</label>
    </ligand>
</feature>
<feature type="binding site" evidence="2">
    <location>
        <position position="118"/>
    </location>
    <ligand>
        <name>Zn(2+)</name>
        <dbReference type="ChEBI" id="CHEBI:29105"/>
        <label>2</label>
    </ligand>
</feature>
<feature type="binding site" evidence="2">
    <location>
        <position position="121"/>
    </location>
    <ligand>
        <name>Zn(2+)</name>
        <dbReference type="ChEBI" id="CHEBI:29105"/>
        <label>2</label>
    </ligand>
</feature>
<feature type="binding site" evidence="2">
    <location>
        <position position="130"/>
    </location>
    <ligand>
        <name>Zn(2+)</name>
        <dbReference type="ChEBI" id="CHEBI:29105"/>
        <label>1</label>
    </ligand>
</feature>
<feature type="binding site" evidence="2">
    <location>
        <position position="157"/>
    </location>
    <ligand>
        <name>Zn(2+)</name>
        <dbReference type="ChEBI" id="CHEBI:29105"/>
        <label>1</label>
    </ligand>
</feature>
<feature type="binding site" evidence="2">
    <location>
        <position position="159"/>
    </location>
    <ligand>
        <name>Zn(2+)</name>
        <dbReference type="ChEBI" id="CHEBI:29105"/>
        <label>1</label>
    </ligand>
</feature>
<feature type="sequence conflict" description="In Ref. 1; BAA13649." evidence="5" ref="1">
    <original>H</original>
    <variation>R</variation>
    <location>
        <position position="159"/>
    </location>
</feature>
<feature type="sequence conflict" description="In Ref. 2; AAC64782." evidence="5" ref="2">
    <original>E</original>
    <variation>G</variation>
    <location>
        <position position="191"/>
    </location>
</feature>
<feature type="sequence conflict" description="In Ref. 2; AAC64782." evidence="5" ref="2">
    <original>H</original>
    <variation>Y</variation>
    <location>
        <position position="241"/>
    </location>
</feature>
<feature type="sequence conflict" description="In Ref. 2; AAC64782." evidence="5" ref="2">
    <original>V</original>
    <variation>E</variation>
    <location>
        <position position="297"/>
    </location>
</feature>
<feature type="sequence conflict" description="In Ref. 2; AAC64782." evidence="5" ref="2">
    <original>S</original>
    <variation>L</variation>
    <location>
        <position position="357"/>
    </location>
</feature>
<feature type="sequence conflict" description="In Ref. 2; AAC64782." evidence="5" ref="2">
    <original>T</original>
    <variation>S</variation>
    <location>
        <position position="376"/>
    </location>
</feature>
<feature type="sequence conflict" description="In Ref. 2; AAC64782." evidence="5" ref="2">
    <original>S</original>
    <variation>G</variation>
    <location>
        <position position="400"/>
    </location>
</feature>
<feature type="sequence conflict" description="In Ref. 1; BAA13649." evidence="5" ref="1">
    <original>Q</original>
    <variation>R</variation>
    <location>
        <position position="436"/>
    </location>
</feature>
<feature type="sequence conflict" description="In Ref. 2; AAC64782." evidence="5" ref="2">
    <original>A</original>
    <variation>V</variation>
    <location>
        <position position="438"/>
    </location>
</feature>
<feature type="sequence conflict" description="In Ref. 1; BAA13649." evidence="5" ref="1">
    <original>N</original>
    <variation>D</variation>
    <location>
        <position position="501"/>
    </location>
</feature>
<gene>
    <name evidence="6" type="primary">Gcm2</name>
    <name type="synonym">Gcmb</name>
</gene>
<organism>
    <name type="scientific">Mus musculus</name>
    <name type="common">Mouse</name>
    <dbReference type="NCBI Taxonomy" id="10090"/>
    <lineage>
        <taxon>Eukaryota</taxon>
        <taxon>Metazoa</taxon>
        <taxon>Chordata</taxon>
        <taxon>Craniata</taxon>
        <taxon>Vertebrata</taxon>
        <taxon>Euteleostomi</taxon>
        <taxon>Mammalia</taxon>
        <taxon>Eutheria</taxon>
        <taxon>Euarchontoglires</taxon>
        <taxon>Glires</taxon>
        <taxon>Rodentia</taxon>
        <taxon>Myomorpha</taxon>
        <taxon>Muroidea</taxon>
        <taxon>Muridae</taxon>
        <taxon>Murinae</taxon>
        <taxon>Mus</taxon>
        <taxon>Mus</taxon>
    </lineage>
</organism>
<accession>O09102</accession>
<accession>Q2TB03</accession>
<accession>Q9QWX7</accession>
<accession>Q9Z289</accession>
<proteinExistence type="evidence at transcript level"/>